<proteinExistence type="inferred from homology"/>
<sequence length="245" mass="26865">MYPVDLHMHTVASTHAYSTLSDYIAQAKQKGIKLFAITDHGPDMEDAPHHWHFINMRIWPRVVDGVGILRGIEANIKNVDGEIDCSGKMFDSLDLIIAGFHEPVFAPHDKATNTQAMISTIASGNVHIISHPGNPKYEIDVKAVAEAAAKHQVALEINNSSFLHSRKGSEDNCRAVAAAVRDAGGWVALGSDSHTAFTMGEFEECLKILDAVDFPLERILNVSPRRLLNFLESRGMAPIAEFADL</sequence>
<reference key="1">
    <citation type="journal article" date="2006" name="BMC Genomics">
        <title>Complete genome sequence of Shigella flexneri 5b and comparison with Shigella flexneri 2a.</title>
        <authorList>
            <person name="Nie H."/>
            <person name="Yang F."/>
            <person name="Zhang X."/>
            <person name="Yang J."/>
            <person name="Chen L."/>
            <person name="Wang J."/>
            <person name="Xiong Z."/>
            <person name="Peng J."/>
            <person name="Sun L."/>
            <person name="Dong J."/>
            <person name="Xue Y."/>
            <person name="Xu X."/>
            <person name="Chen S."/>
            <person name="Yao Z."/>
            <person name="Shen Y."/>
            <person name="Jin Q."/>
        </authorList>
    </citation>
    <scope>NUCLEOTIDE SEQUENCE [LARGE SCALE GENOMIC DNA]</scope>
    <source>
        <strain>8401</strain>
    </source>
</reference>
<comment type="cofactor">
    <cofactor evidence="1">
        <name>Zn(2+)</name>
        <dbReference type="ChEBI" id="CHEBI:29105"/>
    </cofactor>
    <text evidence="1">Binds 3 Zn(2+) ions per subunit.</text>
</comment>
<comment type="subunit">
    <text evidence="1">Homotrimer.</text>
</comment>
<comment type="similarity">
    <text evidence="1">Belongs to the PHP family.</text>
</comment>
<accession>Q0T606</accession>
<keyword id="KW-0378">Hydrolase</keyword>
<keyword id="KW-0479">Metal-binding</keyword>
<keyword id="KW-0862">Zinc</keyword>
<feature type="chain" id="PRO_1000069034" description="Probable phosphatase YcdX">
    <location>
        <begin position="1"/>
        <end position="245"/>
    </location>
</feature>
<feature type="binding site" evidence="1">
    <location>
        <position position="7"/>
    </location>
    <ligand>
        <name>Zn(2+)</name>
        <dbReference type="ChEBI" id="CHEBI:29105"/>
        <label>1</label>
    </ligand>
</feature>
<feature type="binding site" evidence="1">
    <location>
        <position position="9"/>
    </location>
    <ligand>
        <name>Zn(2+)</name>
        <dbReference type="ChEBI" id="CHEBI:29105"/>
        <label>1</label>
    </ligand>
</feature>
<feature type="binding site" evidence="1">
    <location>
        <position position="15"/>
    </location>
    <ligand>
        <name>Zn(2+)</name>
        <dbReference type="ChEBI" id="CHEBI:29105"/>
        <label>2</label>
    </ligand>
</feature>
<feature type="binding site" evidence="1">
    <location>
        <position position="40"/>
    </location>
    <ligand>
        <name>Zn(2+)</name>
        <dbReference type="ChEBI" id="CHEBI:29105"/>
        <label>2</label>
    </ligand>
</feature>
<feature type="binding site" evidence="1">
    <location>
        <position position="73"/>
    </location>
    <ligand>
        <name>Zn(2+)</name>
        <dbReference type="ChEBI" id="CHEBI:29105"/>
        <label>1</label>
    </ligand>
</feature>
<feature type="binding site" evidence="1">
    <location>
        <position position="73"/>
    </location>
    <ligand>
        <name>Zn(2+)</name>
        <dbReference type="ChEBI" id="CHEBI:29105"/>
        <label>3</label>
    </ligand>
</feature>
<feature type="binding site" evidence="1">
    <location>
        <position position="101"/>
    </location>
    <ligand>
        <name>Zn(2+)</name>
        <dbReference type="ChEBI" id="CHEBI:29105"/>
        <label>3</label>
    </ligand>
</feature>
<feature type="binding site" evidence="1">
    <location>
        <position position="131"/>
    </location>
    <ligand>
        <name>Zn(2+)</name>
        <dbReference type="ChEBI" id="CHEBI:29105"/>
        <label>3</label>
    </ligand>
</feature>
<feature type="binding site" evidence="1">
    <location>
        <position position="192"/>
    </location>
    <ligand>
        <name>Zn(2+)</name>
        <dbReference type="ChEBI" id="CHEBI:29105"/>
        <label>1</label>
    </ligand>
</feature>
<feature type="binding site" evidence="1">
    <location>
        <position position="194"/>
    </location>
    <ligand>
        <name>Zn(2+)</name>
        <dbReference type="ChEBI" id="CHEBI:29105"/>
        <label>2</label>
    </ligand>
</feature>
<evidence type="ECO:0000255" key="1">
    <source>
        <dbReference type="HAMAP-Rule" id="MF_01561"/>
    </source>
</evidence>
<gene>
    <name evidence="1" type="primary">ycdX</name>
    <name type="ordered locus">SFV_1045</name>
</gene>
<dbReference type="EC" id="3.1.3.-" evidence="1"/>
<dbReference type="EMBL" id="CP000266">
    <property type="protein sequence ID" value="ABF03259.1"/>
    <property type="molecule type" value="Genomic_DNA"/>
</dbReference>
<dbReference type="RefSeq" id="WP_000283673.1">
    <property type="nucleotide sequence ID" value="NC_008258.1"/>
</dbReference>
<dbReference type="SMR" id="Q0T606"/>
<dbReference type="KEGG" id="sfv:SFV_1045"/>
<dbReference type="HOGENOM" id="CLU_061999_0_1_6"/>
<dbReference type="Proteomes" id="UP000000659">
    <property type="component" value="Chromosome"/>
</dbReference>
<dbReference type="GO" id="GO:0005829">
    <property type="term" value="C:cytosol"/>
    <property type="evidence" value="ECO:0007669"/>
    <property type="project" value="TreeGrafter"/>
</dbReference>
<dbReference type="GO" id="GO:0016791">
    <property type="term" value="F:phosphatase activity"/>
    <property type="evidence" value="ECO:0007669"/>
    <property type="project" value="UniProtKB-UniRule"/>
</dbReference>
<dbReference type="GO" id="GO:0008270">
    <property type="term" value="F:zinc ion binding"/>
    <property type="evidence" value="ECO:0007669"/>
    <property type="project" value="UniProtKB-UniRule"/>
</dbReference>
<dbReference type="GO" id="GO:0071978">
    <property type="term" value="P:bacterial-type flagellum-dependent swarming motility"/>
    <property type="evidence" value="ECO:0007669"/>
    <property type="project" value="TreeGrafter"/>
</dbReference>
<dbReference type="CDD" id="cd07437">
    <property type="entry name" value="PHP_HisPPase_Ycdx_like"/>
    <property type="match status" value="1"/>
</dbReference>
<dbReference type="FunFam" id="3.20.20.140:FF:000008">
    <property type="entry name" value="Probable phosphatase YcdX"/>
    <property type="match status" value="1"/>
</dbReference>
<dbReference type="Gene3D" id="3.20.20.140">
    <property type="entry name" value="Metal-dependent hydrolases"/>
    <property type="match status" value="1"/>
</dbReference>
<dbReference type="HAMAP" id="MF_01561">
    <property type="entry name" value="YcdX_phosphat"/>
    <property type="match status" value="1"/>
</dbReference>
<dbReference type="InterPro" id="IPR023710">
    <property type="entry name" value="Phosphatase_YcdX_put"/>
</dbReference>
<dbReference type="InterPro" id="IPR004013">
    <property type="entry name" value="PHP_dom"/>
</dbReference>
<dbReference type="InterPro" id="IPR050243">
    <property type="entry name" value="PHP_phosphatase"/>
</dbReference>
<dbReference type="InterPro" id="IPR003141">
    <property type="entry name" value="Pol/His_phosphatase_N"/>
</dbReference>
<dbReference type="InterPro" id="IPR016195">
    <property type="entry name" value="Pol/histidinol_Pase-like"/>
</dbReference>
<dbReference type="NCBIfam" id="NF006702">
    <property type="entry name" value="PRK09248.1"/>
    <property type="match status" value="1"/>
</dbReference>
<dbReference type="PANTHER" id="PTHR36928">
    <property type="entry name" value="PHOSPHATASE YCDX-RELATED"/>
    <property type="match status" value="1"/>
</dbReference>
<dbReference type="PANTHER" id="PTHR36928:SF1">
    <property type="entry name" value="PHOSPHATASE YCDX-RELATED"/>
    <property type="match status" value="1"/>
</dbReference>
<dbReference type="Pfam" id="PF02811">
    <property type="entry name" value="PHP"/>
    <property type="match status" value="1"/>
</dbReference>
<dbReference type="SMART" id="SM00481">
    <property type="entry name" value="POLIIIAc"/>
    <property type="match status" value="1"/>
</dbReference>
<dbReference type="SUPFAM" id="SSF89550">
    <property type="entry name" value="PHP domain-like"/>
    <property type="match status" value="1"/>
</dbReference>
<organism>
    <name type="scientific">Shigella flexneri serotype 5b (strain 8401)</name>
    <dbReference type="NCBI Taxonomy" id="373384"/>
    <lineage>
        <taxon>Bacteria</taxon>
        <taxon>Pseudomonadati</taxon>
        <taxon>Pseudomonadota</taxon>
        <taxon>Gammaproteobacteria</taxon>
        <taxon>Enterobacterales</taxon>
        <taxon>Enterobacteriaceae</taxon>
        <taxon>Shigella</taxon>
    </lineage>
</organism>
<protein>
    <recommendedName>
        <fullName evidence="1">Probable phosphatase YcdX</fullName>
        <ecNumber evidence="1">3.1.3.-</ecNumber>
    </recommendedName>
</protein>
<name>YCDX_SHIF8</name>